<feature type="chain" id="PRO_0000243979" description="Uncharacterized protein L888">
    <location>
        <begin position="1"/>
        <end position="271"/>
    </location>
</feature>
<reference key="1">
    <citation type="journal article" date="2004" name="Science">
        <title>The 1.2-megabase genome sequence of Mimivirus.</title>
        <authorList>
            <person name="Raoult D."/>
            <person name="Audic S."/>
            <person name="Robert C."/>
            <person name="Abergel C."/>
            <person name="Renesto P."/>
            <person name="Ogata H."/>
            <person name="La Scola B."/>
            <person name="Susan M."/>
            <person name="Claverie J.-M."/>
        </authorList>
    </citation>
    <scope>NUCLEOTIDE SEQUENCE [LARGE SCALE GENOMIC DNA]</scope>
    <source>
        <strain>Rowbotham-Bradford</strain>
    </source>
</reference>
<sequence length="271" mass="31418">MKPQKIIYKIEEFPAIHYLHNALTKNYDVIFKYSENIINNKKVSQIKRIPGQWTGQKADDFVNGLDDTWIYGWTDQNTWFNYLMIYNNHIINNGDDMDNQIINDIFIPIKSIINICGLSLLMPEATIKPHIDENTTISKNRLAYHFNVFGNGSIININGILLKQKPKKSLVFDSGFIHSVTNGNEYRLLIYIDFNVLLSKNFIYGRITDLSNDKIIIKSYYKHDNGIYNINHYNYGQGLATVSQYTVSLMFNNQRSDILKNDSILIEIISS</sequence>
<accession>Q5UQY2</accession>
<dbReference type="EMBL" id="AY653733">
    <property type="protein sequence ID" value="AAV51145.1"/>
    <property type="molecule type" value="Genomic_DNA"/>
</dbReference>
<dbReference type="SMR" id="Q5UQY2"/>
<dbReference type="KEGG" id="vg:9925556"/>
<dbReference type="Proteomes" id="UP000001134">
    <property type="component" value="Genome"/>
</dbReference>
<dbReference type="Gene3D" id="2.60.120.330">
    <property type="entry name" value="B-lactam Antibiotic, Isopenicillin N Synthase, Chain"/>
    <property type="match status" value="1"/>
</dbReference>
<dbReference type="InterPro" id="IPR007803">
    <property type="entry name" value="Asp/Arg/Pro-Hydrxlase"/>
</dbReference>
<dbReference type="InterPro" id="IPR027443">
    <property type="entry name" value="IPNS-like_sf"/>
</dbReference>
<dbReference type="Pfam" id="PF05118">
    <property type="entry name" value="Asp_Arg_Hydrox"/>
    <property type="match status" value="1"/>
</dbReference>
<gene>
    <name type="ordered locus">MIMI_L888</name>
</gene>
<keyword id="KW-1185">Reference proteome</keyword>
<organism>
    <name type="scientific">Acanthamoeba polyphaga mimivirus</name>
    <name type="common">APMV</name>
    <dbReference type="NCBI Taxonomy" id="212035"/>
    <lineage>
        <taxon>Viruses</taxon>
        <taxon>Varidnaviria</taxon>
        <taxon>Bamfordvirae</taxon>
        <taxon>Nucleocytoviricota</taxon>
        <taxon>Megaviricetes</taxon>
        <taxon>Imitervirales</taxon>
        <taxon>Mimiviridae</taxon>
        <taxon>Megamimivirinae</taxon>
        <taxon>Mimivirus</taxon>
        <taxon>Mimivirus bradfordmassiliense</taxon>
    </lineage>
</organism>
<name>YL888_MIMIV</name>
<organismHost>
    <name type="scientific">Acanthamoeba polyphaga</name>
    <name type="common">Amoeba</name>
    <dbReference type="NCBI Taxonomy" id="5757"/>
</organismHost>
<protein>
    <recommendedName>
        <fullName>Uncharacterized protein L888</fullName>
    </recommendedName>
</protein>
<proteinExistence type="predicted"/>